<dbReference type="EC" id="7.1.1.8" evidence="2"/>
<dbReference type="EMBL" id="AF107888">
    <property type="protein sequence ID" value="AAD04933.1"/>
    <property type="molecule type" value="Genomic_DNA"/>
</dbReference>
<dbReference type="SMR" id="Q9ZFB6"/>
<dbReference type="GO" id="GO:0005886">
    <property type="term" value="C:plasma membrane"/>
    <property type="evidence" value="ECO:0007669"/>
    <property type="project" value="UniProtKB-SubCell"/>
</dbReference>
<dbReference type="GO" id="GO:0046872">
    <property type="term" value="F:metal ion binding"/>
    <property type="evidence" value="ECO:0007669"/>
    <property type="project" value="UniProtKB-KW"/>
</dbReference>
<dbReference type="GO" id="GO:0008121">
    <property type="term" value="F:ubiquinol-cytochrome-c reductase activity"/>
    <property type="evidence" value="ECO:0007669"/>
    <property type="project" value="UniProtKB-EC"/>
</dbReference>
<dbReference type="GO" id="GO:0022904">
    <property type="term" value="P:respiratory electron transport chain"/>
    <property type="evidence" value="ECO:0007669"/>
    <property type="project" value="InterPro"/>
</dbReference>
<dbReference type="FunFam" id="1.20.810.10:FF:000007">
    <property type="entry name" value="Ubiquinol-cytochrome C reductase B subunit"/>
    <property type="match status" value="1"/>
</dbReference>
<dbReference type="Gene3D" id="1.20.810.10">
    <property type="entry name" value="Cytochrome Bc1 Complex, Chain C"/>
    <property type="match status" value="1"/>
</dbReference>
<dbReference type="InterPro" id="IPR005797">
    <property type="entry name" value="Cyt_b/b6_N"/>
</dbReference>
<dbReference type="InterPro" id="IPR027387">
    <property type="entry name" value="Cytb/b6-like_sf"/>
</dbReference>
<dbReference type="InterPro" id="IPR016174">
    <property type="entry name" value="Di-haem_cyt_TM"/>
</dbReference>
<dbReference type="PANTHER" id="PTHR19271">
    <property type="entry name" value="CYTOCHROME B"/>
    <property type="match status" value="1"/>
</dbReference>
<dbReference type="PANTHER" id="PTHR19271:SF16">
    <property type="entry name" value="CYTOCHROME B"/>
    <property type="match status" value="1"/>
</dbReference>
<dbReference type="Pfam" id="PF13631">
    <property type="entry name" value="Cytochrom_B_N_2"/>
    <property type="match status" value="1"/>
</dbReference>
<dbReference type="SUPFAM" id="SSF81342">
    <property type="entry name" value="Transmembrane di-heme cytochromes"/>
    <property type="match status" value="1"/>
</dbReference>
<dbReference type="PROSITE" id="PS51002">
    <property type="entry name" value="CYTB_NTER"/>
    <property type="match status" value="1"/>
</dbReference>
<organism>
    <name type="scientific">Streptomyces lividans</name>
    <dbReference type="NCBI Taxonomy" id="1916"/>
    <lineage>
        <taxon>Bacteria</taxon>
        <taxon>Bacillati</taxon>
        <taxon>Actinomycetota</taxon>
        <taxon>Actinomycetes</taxon>
        <taxon>Kitasatosporales</taxon>
        <taxon>Streptomycetaceae</taxon>
        <taxon>Streptomyces</taxon>
    </lineage>
</organism>
<reference key="1">
    <citation type="submission" date="1998-11" db="EMBL/GenBank/DDBJ databases">
        <title>Cytochrome b of Streptomyces lividans.</title>
        <authorList>
            <person name="Parro V."/>
            <person name="Mellado R.P."/>
        </authorList>
    </citation>
    <scope>NUCLEOTIDE SEQUENCE [GENOMIC DNA]</scope>
    <source>
        <strain>TK21</strain>
    </source>
</reference>
<name>QCRB_STRLI</name>
<sequence length="549" mass="61203">MSTAANEPSRSRGKAPAGERVADWADGRLGIYSLAKANMRKIFPDHWSFMLGEVCLYSFIIIILTGVYLTLFFHPSMAEVEYHGSYVPLQGQMMSEAYASTLDISFDVRGGLLIRQIHHWAALIFLAGMFVHMMRVFFTGAFRKPREVNWLFGFLLLVLGMFTGFTGYSLPDDLLSGTGIRFMEGAILSVPIVGTYISFFLFGGEFPGHDFVSRFYSIHILLLPGIMLGLLVGHLILVFYHKHTQFAGPGKTNKNVVGMPLLPVYTAKAGGFFFLVFGVISVVSAIATINPIWPSGPTGPTRSPPAPSRLVLGFSEGLIRVMPGWEINAWGHTLVLGVFVPLLIFPLVLAAIAVYPFIESWVTGYKREHYILDRPLLDRPRNAPTRTAFGVAWLTVYFVLLIGGGNDLWATHFHLSINAITWFVRIAFFVGPVVAFIATKRICLGLQRRDKDKVLHGRESAIIKRLPHGEFIEVHEPISQEQLHTLTAHEQYKPAEIGPTVDENGVERKVSGTQKLRAKLSESYYGEESQIPKPTVEEYKEITSGHGHH</sequence>
<keyword id="KW-1003">Cell membrane</keyword>
<keyword id="KW-0249">Electron transport</keyword>
<keyword id="KW-0349">Heme</keyword>
<keyword id="KW-0408">Iron</keyword>
<keyword id="KW-0472">Membrane</keyword>
<keyword id="KW-0479">Metal-binding</keyword>
<keyword id="KW-0679">Respiratory chain</keyword>
<keyword id="KW-1278">Translocase</keyword>
<keyword id="KW-0812">Transmembrane</keyword>
<keyword id="KW-1133">Transmembrane helix</keyword>
<keyword id="KW-0813">Transport</keyword>
<feature type="chain" id="PRO_0000061929" description="Cytochrome bc1 complex cytochrome b subunit">
    <location>
        <begin position="1"/>
        <end position="549"/>
    </location>
</feature>
<feature type="transmembrane region" description="Helical" evidence="4">
    <location>
        <begin position="54"/>
        <end position="74"/>
    </location>
</feature>
<feature type="transmembrane region" description="Helical" evidence="4">
    <location>
        <begin position="122"/>
        <end position="142"/>
    </location>
</feature>
<feature type="transmembrane region" description="Helical" evidence="4">
    <location>
        <begin position="150"/>
        <end position="170"/>
    </location>
</feature>
<feature type="transmembrane region" description="Helical" evidence="4">
    <location>
        <begin position="182"/>
        <end position="202"/>
    </location>
</feature>
<feature type="transmembrane region" description="Helical" evidence="4">
    <location>
        <begin position="220"/>
        <end position="240"/>
    </location>
</feature>
<feature type="transmembrane region" description="Helical" evidence="4">
    <location>
        <begin position="269"/>
        <end position="289"/>
    </location>
</feature>
<feature type="transmembrane region" description="Helical" evidence="4">
    <location>
        <begin position="334"/>
        <end position="354"/>
    </location>
</feature>
<feature type="transmembrane region" description="Helical" evidence="4">
    <location>
        <begin position="389"/>
        <end position="409"/>
    </location>
</feature>
<feature type="transmembrane region" description="Helical" evidence="4">
    <location>
        <begin position="417"/>
        <end position="437"/>
    </location>
</feature>
<feature type="binding site" description="axial binding residue" evidence="4">
    <location>
        <position position="118"/>
    </location>
    <ligand>
        <name>heme</name>
        <dbReference type="ChEBI" id="CHEBI:30413"/>
        <label>1</label>
    </ligand>
    <ligandPart>
        <name>Fe</name>
        <dbReference type="ChEBI" id="CHEBI:18248"/>
    </ligandPart>
</feature>
<feature type="binding site" description="axial binding residue" evidence="4">
    <location>
        <position position="132"/>
    </location>
    <ligand>
        <name>heme</name>
        <dbReference type="ChEBI" id="CHEBI:30413"/>
        <label>2</label>
    </ligand>
    <ligandPart>
        <name>Fe</name>
        <dbReference type="ChEBI" id="CHEBI:18248"/>
    </ligandPart>
</feature>
<feature type="binding site" description="axial binding residue" evidence="4">
    <location>
        <position position="219"/>
    </location>
    <ligand>
        <name>heme</name>
        <dbReference type="ChEBI" id="CHEBI:30413"/>
        <label>1</label>
    </ligand>
    <ligandPart>
        <name>Fe</name>
        <dbReference type="ChEBI" id="CHEBI:18248"/>
    </ligandPart>
</feature>
<feature type="binding site" description="axial binding residue" evidence="4">
    <location>
        <position position="234"/>
    </location>
    <ligand>
        <name>heme</name>
        <dbReference type="ChEBI" id="CHEBI:30413"/>
        <label>2</label>
    </ligand>
    <ligandPart>
        <name>Fe</name>
        <dbReference type="ChEBI" id="CHEBI:18248"/>
    </ligandPart>
</feature>
<comment type="function">
    <text evidence="2">Cytochrome b subunit of the cytochrome bc1 complex, an essential component of the respiratory electron transport chain required for ATP synthesis. The bc1 complex catalyzes the oxidation of ubiquinol and the reduction of cytochrome c in the respiratory chain. The bc1 complex operates through a Q-cycle mechanism that couples electron transfer to generation of the proton gradient that drives ATP synthesis. The cytochrome b subunit contains two ubiquinol reactive sites: the oxidation (QP) site and the reduction (QN) site.</text>
</comment>
<comment type="catalytic activity">
    <reaction evidence="2">
        <text>a quinol + 2 Fe(III)-[cytochrome c](out) = a quinone + 2 Fe(II)-[cytochrome c](out) + 2 H(+)(out)</text>
        <dbReference type="Rhea" id="RHEA:11484"/>
        <dbReference type="Rhea" id="RHEA-COMP:10350"/>
        <dbReference type="Rhea" id="RHEA-COMP:14399"/>
        <dbReference type="ChEBI" id="CHEBI:15378"/>
        <dbReference type="ChEBI" id="CHEBI:24646"/>
        <dbReference type="ChEBI" id="CHEBI:29033"/>
        <dbReference type="ChEBI" id="CHEBI:29034"/>
        <dbReference type="ChEBI" id="CHEBI:132124"/>
        <dbReference type="EC" id="7.1.1.8"/>
    </reaction>
</comment>
<comment type="cofactor">
    <cofactor evidence="1">
        <name>heme</name>
        <dbReference type="ChEBI" id="CHEBI:30413"/>
    </cofactor>
    <text evidence="1">Binds 2 heme groups non-covalently per subunit.</text>
</comment>
<comment type="subunit">
    <text evidence="2">The cytochrome bc1 complex is composed of a cytochrome b (QcrB), the Rieske iron-sulfur protein (QcrA) and a diheme cytochrome c (QcrC) subunit.</text>
</comment>
<comment type="subcellular location">
    <subcellularLocation>
        <location evidence="3">Cell membrane</location>
        <topology evidence="3">Multi-pass membrane protein</topology>
    </subcellularLocation>
</comment>
<comment type="similarity">
    <text evidence="4">Belongs to the cytochrome b family.</text>
</comment>
<gene>
    <name type="primary">qcrB</name>
</gene>
<accession>Q9ZFB6</accession>
<protein>
    <recommendedName>
        <fullName>Cytochrome bc1 complex cytochrome b subunit</fullName>
        <ecNumber evidence="2">7.1.1.8</ecNumber>
    </recommendedName>
    <alternativeName>
        <fullName>Cytochrome bc1 reductase complex subunit QcrB</fullName>
    </alternativeName>
    <alternativeName>
        <fullName>Ubiquinol--cytochrome c reductase cytochrome b subunit</fullName>
    </alternativeName>
</protein>
<evidence type="ECO:0000250" key="1">
    <source>
        <dbReference type="UniProtKB" id="P00163"/>
    </source>
</evidence>
<evidence type="ECO:0000250" key="2">
    <source>
        <dbReference type="UniProtKB" id="P9WP37"/>
    </source>
</evidence>
<evidence type="ECO:0000255" key="3"/>
<evidence type="ECO:0000255" key="4">
    <source>
        <dbReference type="PROSITE-ProRule" id="PRU00968"/>
    </source>
</evidence>
<proteinExistence type="inferred from homology"/>